<feature type="initiator methionine" description="Removed" evidence="5">
    <location>
        <position position="1"/>
    </location>
</feature>
<feature type="chain" id="PRO_0000153652" description="Prefoldin subunit 3">
    <location>
        <begin position="2"/>
        <end position="197"/>
    </location>
</feature>
<feature type="modified residue" description="N-acetylalanine" evidence="5">
    <location>
        <position position="2"/>
    </location>
</feature>
<feature type="modified residue" description="N6-acetyllysine" evidence="4">
    <location>
        <position position="59"/>
    </location>
</feature>
<feature type="splice variant" id="VSP_060081" description="In isoform 2.">
    <original>MAAVKDSCGKGEMATGNGRRLHLGIPEAVFV</original>
    <variation>MAPQPMIHTQQGLRTSSPSTPSPEHQ</variation>
    <location>
        <begin position="1"/>
        <end position="31"/>
    </location>
</feature>
<feature type="sequence variant" id="VAR_023371" description="In dbSNP:rs572013." evidence="1">
    <original>V</original>
    <variation>M</variation>
    <location>
        <position position="123"/>
    </location>
</feature>
<proteinExistence type="evidence at protein level"/>
<reference key="1">
    <citation type="journal article" date="1997" name="Genomics">
        <title>Characterization of the gene (VBP1) and transcript for the von Hippel-Lindau binding protein and isolation of the highly conserved murine homologue.</title>
        <authorList>
            <person name="Brinke A."/>
            <person name="Green P.M."/>
            <person name="Giannelli F."/>
        </authorList>
    </citation>
    <scope>NUCLEOTIDE SEQUENCE [MRNA] (ISOFORM 1)</scope>
    <source>
        <tissue>Brain</tissue>
    </source>
</reference>
<reference key="2">
    <citation type="journal article" date="1998" name="Cell">
        <title>Prefoldin, a chaperone that delivers unfolded proteins to cytosolic chaperonin.</title>
        <authorList>
            <person name="Vainberg I.E."/>
            <person name="Lewis S.A."/>
            <person name="Rommelaere H."/>
            <person name="Ampe C."/>
            <person name="Vandekerckhove J."/>
            <person name="Klein H.L."/>
            <person name="Cowan N.J."/>
        </authorList>
    </citation>
    <scope>NUCLEOTIDE SEQUENCE [MRNA] (ISOFORM 1)</scope>
    <scope>FUNCTION</scope>
</reference>
<reference key="3">
    <citation type="journal article" date="2004" name="Nat. Genet.">
        <title>Complete sequencing and characterization of 21,243 full-length human cDNAs.</title>
        <authorList>
            <person name="Ota T."/>
            <person name="Suzuki Y."/>
            <person name="Nishikawa T."/>
            <person name="Otsuki T."/>
            <person name="Sugiyama T."/>
            <person name="Irie R."/>
            <person name="Wakamatsu A."/>
            <person name="Hayashi K."/>
            <person name="Sato H."/>
            <person name="Nagai K."/>
            <person name="Kimura K."/>
            <person name="Makita H."/>
            <person name="Sekine M."/>
            <person name="Obayashi M."/>
            <person name="Nishi T."/>
            <person name="Shibahara T."/>
            <person name="Tanaka T."/>
            <person name="Ishii S."/>
            <person name="Yamamoto J."/>
            <person name="Saito K."/>
            <person name="Kawai Y."/>
            <person name="Isono Y."/>
            <person name="Nakamura Y."/>
            <person name="Nagahari K."/>
            <person name="Murakami K."/>
            <person name="Yasuda T."/>
            <person name="Iwayanagi T."/>
            <person name="Wagatsuma M."/>
            <person name="Shiratori A."/>
            <person name="Sudo H."/>
            <person name="Hosoiri T."/>
            <person name="Kaku Y."/>
            <person name="Kodaira H."/>
            <person name="Kondo H."/>
            <person name="Sugawara M."/>
            <person name="Takahashi M."/>
            <person name="Kanda K."/>
            <person name="Yokoi T."/>
            <person name="Furuya T."/>
            <person name="Kikkawa E."/>
            <person name="Omura Y."/>
            <person name="Abe K."/>
            <person name="Kamihara K."/>
            <person name="Katsuta N."/>
            <person name="Sato K."/>
            <person name="Tanikawa M."/>
            <person name="Yamazaki M."/>
            <person name="Ninomiya K."/>
            <person name="Ishibashi T."/>
            <person name="Yamashita H."/>
            <person name="Murakawa K."/>
            <person name="Fujimori K."/>
            <person name="Tanai H."/>
            <person name="Kimata M."/>
            <person name="Watanabe M."/>
            <person name="Hiraoka S."/>
            <person name="Chiba Y."/>
            <person name="Ishida S."/>
            <person name="Ono Y."/>
            <person name="Takiguchi S."/>
            <person name="Watanabe S."/>
            <person name="Yosida M."/>
            <person name="Hotuta T."/>
            <person name="Kusano J."/>
            <person name="Kanehori K."/>
            <person name="Takahashi-Fujii A."/>
            <person name="Hara H."/>
            <person name="Tanase T.-O."/>
            <person name="Nomura Y."/>
            <person name="Togiya S."/>
            <person name="Komai F."/>
            <person name="Hara R."/>
            <person name="Takeuchi K."/>
            <person name="Arita M."/>
            <person name="Imose N."/>
            <person name="Musashino K."/>
            <person name="Yuuki H."/>
            <person name="Oshima A."/>
            <person name="Sasaki N."/>
            <person name="Aotsuka S."/>
            <person name="Yoshikawa Y."/>
            <person name="Matsunawa H."/>
            <person name="Ichihara T."/>
            <person name="Shiohata N."/>
            <person name="Sano S."/>
            <person name="Moriya S."/>
            <person name="Momiyama H."/>
            <person name="Satoh N."/>
            <person name="Takami S."/>
            <person name="Terashima Y."/>
            <person name="Suzuki O."/>
            <person name="Nakagawa S."/>
            <person name="Senoh A."/>
            <person name="Mizoguchi H."/>
            <person name="Goto Y."/>
            <person name="Shimizu F."/>
            <person name="Wakebe H."/>
            <person name="Hishigaki H."/>
            <person name="Watanabe T."/>
            <person name="Sugiyama A."/>
            <person name="Takemoto M."/>
            <person name="Kawakami B."/>
            <person name="Yamazaki M."/>
            <person name="Watanabe K."/>
            <person name="Kumagai A."/>
            <person name="Itakura S."/>
            <person name="Fukuzumi Y."/>
            <person name="Fujimori Y."/>
            <person name="Komiyama M."/>
            <person name="Tashiro H."/>
            <person name="Tanigami A."/>
            <person name="Fujiwara T."/>
            <person name="Ono T."/>
            <person name="Yamada K."/>
            <person name="Fujii Y."/>
            <person name="Ozaki K."/>
            <person name="Hirao M."/>
            <person name="Ohmori Y."/>
            <person name="Kawabata A."/>
            <person name="Hikiji T."/>
            <person name="Kobatake N."/>
            <person name="Inagaki H."/>
            <person name="Ikema Y."/>
            <person name="Okamoto S."/>
            <person name="Okitani R."/>
            <person name="Kawakami T."/>
            <person name="Noguchi S."/>
            <person name="Itoh T."/>
            <person name="Shigeta K."/>
            <person name="Senba T."/>
            <person name="Matsumura K."/>
            <person name="Nakajima Y."/>
            <person name="Mizuno T."/>
            <person name="Morinaga M."/>
            <person name="Sasaki M."/>
            <person name="Togashi T."/>
            <person name="Oyama M."/>
            <person name="Hata H."/>
            <person name="Watanabe M."/>
            <person name="Komatsu T."/>
            <person name="Mizushima-Sugano J."/>
            <person name="Satoh T."/>
            <person name="Shirai Y."/>
            <person name="Takahashi Y."/>
            <person name="Nakagawa K."/>
            <person name="Okumura K."/>
            <person name="Nagase T."/>
            <person name="Nomura N."/>
            <person name="Kikuchi H."/>
            <person name="Masuho Y."/>
            <person name="Yamashita R."/>
            <person name="Nakai K."/>
            <person name="Yada T."/>
            <person name="Nakamura Y."/>
            <person name="Ohara O."/>
            <person name="Isogai T."/>
            <person name="Sugano S."/>
        </authorList>
    </citation>
    <scope>NUCLEOTIDE SEQUENCE [LARGE SCALE MRNA] (ISOFORMS 1 AND 2)</scope>
    <source>
        <tissue>Cerebellum</tissue>
        <tissue>Esophagus</tissue>
    </source>
</reference>
<reference key="4">
    <citation type="submission" date="2004-10" db="EMBL/GenBank/DDBJ databases">
        <title>Cloning of human full-length CDSs in BD Creator(TM) system donor vector.</title>
        <authorList>
            <person name="Kalnine N."/>
            <person name="Chen X."/>
            <person name="Rolfs A."/>
            <person name="Halleck A."/>
            <person name="Hines L."/>
            <person name="Eisenstein S."/>
            <person name="Koundinya M."/>
            <person name="Raphael J."/>
            <person name="Moreira D."/>
            <person name="Kelley T."/>
            <person name="LaBaer J."/>
            <person name="Lin Y."/>
            <person name="Phelan M."/>
            <person name="Farmer A."/>
        </authorList>
    </citation>
    <scope>NUCLEOTIDE SEQUENCE [LARGE SCALE MRNA] (ISOFORM 1)</scope>
</reference>
<reference key="5">
    <citation type="journal article" date="2005" name="Nature">
        <title>The DNA sequence of the human X chromosome.</title>
        <authorList>
            <person name="Ross M.T."/>
            <person name="Grafham D.V."/>
            <person name="Coffey A.J."/>
            <person name="Scherer S."/>
            <person name="McLay K."/>
            <person name="Muzny D."/>
            <person name="Platzer M."/>
            <person name="Howell G.R."/>
            <person name="Burrows C."/>
            <person name="Bird C.P."/>
            <person name="Frankish A."/>
            <person name="Lovell F.L."/>
            <person name="Howe K.L."/>
            <person name="Ashurst J.L."/>
            <person name="Fulton R.S."/>
            <person name="Sudbrak R."/>
            <person name="Wen G."/>
            <person name="Jones M.C."/>
            <person name="Hurles M.E."/>
            <person name="Andrews T.D."/>
            <person name="Scott C.E."/>
            <person name="Searle S."/>
            <person name="Ramser J."/>
            <person name="Whittaker A."/>
            <person name="Deadman R."/>
            <person name="Carter N.P."/>
            <person name="Hunt S.E."/>
            <person name="Chen R."/>
            <person name="Cree A."/>
            <person name="Gunaratne P."/>
            <person name="Havlak P."/>
            <person name="Hodgson A."/>
            <person name="Metzker M.L."/>
            <person name="Richards S."/>
            <person name="Scott G."/>
            <person name="Steffen D."/>
            <person name="Sodergren E."/>
            <person name="Wheeler D.A."/>
            <person name="Worley K.C."/>
            <person name="Ainscough R."/>
            <person name="Ambrose K.D."/>
            <person name="Ansari-Lari M.A."/>
            <person name="Aradhya S."/>
            <person name="Ashwell R.I."/>
            <person name="Babbage A.K."/>
            <person name="Bagguley C.L."/>
            <person name="Ballabio A."/>
            <person name="Banerjee R."/>
            <person name="Barker G.E."/>
            <person name="Barlow K.F."/>
            <person name="Barrett I.P."/>
            <person name="Bates K.N."/>
            <person name="Beare D.M."/>
            <person name="Beasley H."/>
            <person name="Beasley O."/>
            <person name="Beck A."/>
            <person name="Bethel G."/>
            <person name="Blechschmidt K."/>
            <person name="Brady N."/>
            <person name="Bray-Allen S."/>
            <person name="Bridgeman A.M."/>
            <person name="Brown A.J."/>
            <person name="Brown M.J."/>
            <person name="Bonnin D."/>
            <person name="Bruford E.A."/>
            <person name="Buhay C."/>
            <person name="Burch P."/>
            <person name="Burford D."/>
            <person name="Burgess J."/>
            <person name="Burrill W."/>
            <person name="Burton J."/>
            <person name="Bye J.M."/>
            <person name="Carder C."/>
            <person name="Carrel L."/>
            <person name="Chako J."/>
            <person name="Chapman J.C."/>
            <person name="Chavez D."/>
            <person name="Chen E."/>
            <person name="Chen G."/>
            <person name="Chen Y."/>
            <person name="Chen Z."/>
            <person name="Chinault C."/>
            <person name="Ciccodicola A."/>
            <person name="Clark S.Y."/>
            <person name="Clarke G."/>
            <person name="Clee C.M."/>
            <person name="Clegg S."/>
            <person name="Clerc-Blankenburg K."/>
            <person name="Clifford K."/>
            <person name="Cobley V."/>
            <person name="Cole C.G."/>
            <person name="Conquer J.S."/>
            <person name="Corby N."/>
            <person name="Connor R.E."/>
            <person name="David R."/>
            <person name="Davies J."/>
            <person name="Davis C."/>
            <person name="Davis J."/>
            <person name="Delgado O."/>
            <person name="Deshazo D."/>
            <person name="Dhami P."/>
            <person name="Ding Y."/>
            <person name="Dinh H."/>
            <person name="Dodsworth S."/>
            <person name="Draper H."/>
            <person name="Dugan-Rocha S."/>
            <person name="Dunham A."/>
            <person name="Dunn M."/>
            <person name="Durbin K.J."/>
            <person name="Dutta I."/>
            <person name="Eades T."/>
            <person name="Ellwood M."/>
            <person name="Emery-Cohen A."/>
            <person name="Errington H."/>
            <person name="Evans K.L."/>
            <person name="Faulkner L."/>
            <person name="Francis F."/>
            <person name="Frankland J."/>
            <person name="Fraser A.E."/>
            <person name="Galgoczy P."/>
            <person name="Gilbert J."/>
            <person name="Gill R."/>
            <person name="Gloeckner G."/>
            <person name="Gregory S.G."/>
            <person name="Gribble S."/>
            <person name="Griffiths C."/>
            <person name="Grocock R."/>
            <person name="Gu Y."/>
            <person name="Gwilliam R."/>
            <person name="Hamilton C."/>
            <person name="Hart E.A."/>
            <person name="Hawes A."/>
            <person name="Heath P.D."/>
            <person name="Heitmann K."/>
            <person name="Hennig S."/>
            <person name="Hernandez J."/>
            <person name="Hinzmann B."/>
            <person name="Ho S."/>
            <person name="Hoffs M."/>
            <person name="Howden P.J."/>
            <person name="Huckle E.J."/>
            <person name="Hume J."/>
            <person name="Hunt P.J."/>
            <person name="Hunt A.R."/>
            <person name="Isherwood J."/>
            <person name="Jacob L."/>
            <person name="Johnson D."/>
            <person name="Jones S."/>
            <person name="de Jong P.J."/>
            <person name="Joseph S.S."/>
            <person name="Keenan S."/>
            <person name="Kelly S."/>
            <person name="Kershaw J.K."/>
            <person name="Khan Z."/>
            <person name="Kioschis P."/>
            <person name="Klages S."/>
            <person name="Knights A.J."/>
            <person name="Kosiura A."/>
            <person name="Kovar-Smith C."/>
            <person name="Laird G.K."/>
            <person name="Langford C."/>
            <person name="Lawlor S."/>
            <person name="Leversha M."/>
            <person name="Lewis L."/>
            <person name="Liu W."/>
            <person name="Lloyd C."/>
            <person name="Lloyd D.M."/>
            <person name="Loulseged H."/>
            <person name="Loveland J.E."/>
            <person name="Lovell J.D."/>
            <person name="Lozado R."/>
            <person name="Lu J."/>
            <person name="Lyne R."/>
            <person name="Ma J."/>
            <person name="Maheshwari M."/>
            <person name="Matthews L.H."/>
            <person name="McDowall J."/>
            <person name="McLaren S."/>
            <person name="McMurray A."/>
            <person name="Meidl P."/>
            <person name="Meitinger T."/>
            <person name="Milne S."/>
            <person name="Miner G."/>
            <person name="Mistry S.L."/>
            <person name="Morgan M."/>
            <person name="Morris S."/>
            <person name="Mueller I."/>
            <person name="Mullikin J.C."/>
            <person name="Nguyen N."/>
            <person name="Nordsiek G."/>
            <person name="Nyakatura G."/>
            <person name="O'dell C.N."/>
            <person name="Okwuonu G."/>
            <person name="Palmer S."/>
            <person name="Pandian R."/>
            <person name="Parker D."/>
            <person name="Parrish J."/>
            <person name="Pasternak S."/>
            <person name="Patel D."/>
            <person name="Pearce A.V."/>
            <person name="Pearson D.M."/>
            <person name="Pelan S.E."/>
            <person name="Perez L."/>
            <person name="Porter K.M."/>
            <person name="Ramsey Y."/>
            <person name="Reichwald K."/>
            <person name="Rhodes S."/>
            <person name="Ridler K.A."/>
            <person name="Schlessinger D."/>
            <person name="Schueler M.G."/>
            <person name="Sehra H.K."/>
            <person name="Shaw-Smith C."/>
            <person name="Shen H."/>
            <person name="Sheridan E.M."/>
            <person name="Shownkeen R."/>
            <person name="Skuce C.D."/>
            <person name="Smith M.L."/>
            <person name="Sotheran E.C."/>
            <person name="Steingruber H.E."/>
            <person name="Steward C.A."/>
            <person name="Storey R."/>
            <person name="Swann R.M."/>
            <person name="Swarbreck D."/>
            <person name="Tabor P.E."/>
            <person name="Taudien S."/>
            <person name="Taylor T."/>
            <person name="Teague B."/>
            <person name="Thomas K."/>
            <person name="Thorpe A."/>
            <person name="Timms K."/>
            <person name="Tracey A."/>
            <person name="Trevanion S."/>
            <person name="Tromans A.C."/>
            <person name="d'Urso M."/>
            <person name="Verduzco D."/>
            <person name="Villasana D."/>
            <person name="Waldron L."/>
            <person name="Wall M."/>
            <person name="Wang Q."/>
            <person name="Warren J."/>
            <person name="Warry G.L."/>
            <person name="Wei X."/>
            <person name="West A."/>
            <person name="Whitehead S.L."/>
            <person name="Whiteley M.N."/>
            <person name="Wilkinson J.E."/>
            <person name="Willey D.L."/>
            <person name="Williams G."/>
            <person name="Williams L."/>
            <person name="Williamson A."/>
            <person name="Williamson H."/>
            <person name="Wilming L."/>
            <person name="Woodmansey R.L."/>
            <person name="Wray P.W."/>
            <person name="Yen J."/>
            <person name="Zhang J."/>
            <person name="Zhou J."/>
            <person name="Zoghbi H."/>
            <person name="Zorilla S."/>
            <person name="Buck D."/>
            <person name="Reinhardt R."/>
            <person name="Poustka A."/>
            <person name="Rosenthal A."/>
            <person name="Lehrach H."/>
            <person name="Meindl A."/>
            <person name="Minx P.J."/>
            <person name="Hillier L.W."/>
            <person name="Willard H.F."/>
            <person name="Wilson R.K."/>
            <person name="Waterston R.H."/>
            <person name="Rice C.M."/>
            <person name="Vaudin M."/>
            <person name="Coulson A."/>
            <person name="Nelson D.L."/>
            <person name="Weinstock G."/>
            <person name="Sulston J.E."/>
            <person name="Durbin R.M."/>
            <person name="Hubbard T."/>
            <person name="Gibbs R.A."/>
            <person name="Beck S."/>
            <person name="Rogers J."/>
            <person name="Bentley D.R."/>
        </authorList>
    </citation>
    <scope>NUCLEOTIDE SEQUENCE [LARGE SCALE GENOMIC DNA]</scope>
    <scope>VARIANT MET-123</scope>
</reference>
<reference key="6">
    <citation type="journal article" date="2004" name="Genome Res.">
        <title>The status, quality, and expansion of the NIH full-length cDNA project: the Mammalian Gene Collection (MGC).</title>
        <authorList>
            <consortium name="The MGC Project Team"/>
        </authorList>
    </citation>
    <scope>NUCLEOTIDE SEQUENCE [LARGE SCALE MRNA] (ISOFORM 1)</scope>
    <source>
        <tissue>Lung</tissue>
    </source>
</reference>
<reference key="7">
    <citation type="journal article" date="1996" name="Cancer Res.">
        <title>Identification of a novel protein (VBP-1) binding to the von Hippel-Lindau (VHL) tumor suppressor gene product.</title>
        <authorList>
            <person name="Tsuchiya H."/>
            <person name="Iseda T."/>
            <person name="Hino O."/>
        </authorList>
    </citation>
    <scope>NUCLEOTIDE SEQUENCE [MRNA] OF 32-197 (ISOFORMS 1/2)</scope>
</reference>
<reference key="8">
    <citation type="journal article" date="2009" name="Science">
        <title>Lysine acetylation targets protein complexes and co-regulates major cellular functions.</title>
        <authorList>
            <person name="Choudhary C."/>
            <person name="Kumar C."/>
            <person name="Gnad F."/>
            <person name="Nielsen M.L."/>
            <person name="Rehman M."/>
            <person name="Walther T.C."/>
            <person name="Olsen J.V."/>
            <person name="Mann M."/>
        </authorList>
    </citation>
    <scope>ACETYLATION [LARGE SCALE ANALYSIS] AT LYS-59</scope>
    <scope>IDENTIFICATION BY MASS SPECTROMETRY [LARGE SCALE ANALYSIS]</scope>
</reference>
<reference key="9">
    <citation type="journal article" date="2011" name="BMC Syst. Biol.">
        <title>Initial characterization of the human central proteome.</title>
        <authorList>
            <person name="Burkard T.R."/>
            <person name="Planyavsky M."/>
            <person name="Kaupe I."/>
            <person name="Breitwieser F.P."/>
            <person name="Buerckstuemmer T."/>
            <person name="Bennett K.L."/>
            <person name="Superti-Furga G."/>
            <person name="Colinge J."/>
        </authorList>
    </citation>
    <scope>IDENTIFICATION BY MASS SPECTROMETRY [LARGE SCALE ANALYSIS]</scope>
</reference>
<reference key="10">
    <citation type="journal article" date="2012" name="Proc. Natl. Acad. Sci. U.S.A.">
        <title>N-terminal acetylome analyses and functional insights of the N-terminal acetyltransferase NatB.</title>
        <authorList>
            <person name="Van Damme P."/>
            <person name="Lasa M."/>
            <person name="Polevoda B."/>
            <person name="Gazquez C."/>
            <person name="Elosegui-Artola A."/>
            <person name="Kim D.S."/>
            <person name="De Juan-Pardo E."/>
            <person name="Demeyer K."/>
            <person name="Hole K."/>
            <person name="Larrea E."/>
            <person name="Timmerman E."/>
            <person name="Prieto J."/>
            <person name="Arnesen T."/>
            <person name="Sherman F."/>
            <person name="Gevaert K."/>
            <person name="Aldabe R."/>
        </authorList>
    </citation>
    <scope>ACETYLATION [LARGE SCALE ANALYSIS] AT ALA-2</scope>
    <scope>CLEAVAGE OF INITIATOR METHIONINE [LARGE SCALE ANALYSIS]</scope>
    <scope>IDENTIFICATION BY MASS SPECTROMETRY [LARGE SCALE ANALYSIS]</scope>
</reference>
<reference key="11">
    <citation type="journal article" date="2014" name="J. Proteomics">
        <title>An enzyme assisted RP-RPLC approach for in-depth analysis of human liver phosphoproteome.</title>
        <authorList>
            <person name="Bian Y."/>
            <person name="Song C."/>
            <person name="Cheng K."/>
            <person name="Dong M."/>
            <person name="Wang F."/>
            <person name="Huang J."/>
            <person name="Sun D."/>
            <person name="Wang L."/>
            <person name="Ye M."/>
            <person name="Zou H."/>
        </authorList>
    </citation>
    <scope>IDENTIFICATION BY MASS SPECTROMETRY [LARGE SCALE ANALYSIS]</scope>
    <source>
        <tissue>Liver</tissue>
    </source>
</reference>
<reference key="12">
    <citation type="journal article" date="2015" name="Proteomics">
        <title>N-terminome analysis of the human mitochondrial proteome.</title>
        <authorList>
            <person name="Vaca Jacome A.S."/>
            <person name="Rabilloud T."/>
            <person name="Schaeffer-Reiss C."/>
            <person name="Rompais M."/>
            <person name="Ayoub D."/>
            <person name="Lane L."/>
            <person name="Bairoch A."/>
            <person name="Van Dorsselaer A."/>
            <person name="Carapito C."/>
        </authorList>
    </citation>
    <scope>IDENTIFICATION BY MASS SPECTROMETRY [LARGE SCALE ANALYSIS]</scope>
</reference>
<sequence>MAAVKDSCGKGEMATGNGRRLHLGIPEAVFVEDVDSFMKQPGNETADTVLKKLDEQYQKYKFMELNLAQKKRRLKGQIPEIKQTLEILKYMQKKKESTNSMETRFLLADNLYCKASVPPTDKVCLWLGANVMLEYDIDEAQALLEKNLSTATKNLDSLEEDLDFLRDQFTTTEVNMARVYNWDVKRRNKDDSTKNKA</sequence>
<evidence type="ECO:0000269" key="1">
    <source>
    </source>
</evidence>
<evidence type="ECO:0000269" key="2">
    <source>
    </source>
</evidence>
<evidence type="ECO:0000305" key="3"/>
<evidence type="ECO:0007744" key="4">
    <source>
    </source>
</evidence>
<evidence type="ECO:0007744" key="5">
    <source>
    </source>
</evidence>
<protein>
    <recommendedName>
        <fullName>Prefoldin subunit 3</fullName>
    </recommendedName>
    <alternativeName>
        <fullName>HIBBJ46</fullName>
    </alternativeName>
    <alternativeName>
        <fullName>von Hippel-Lindau-binding protein 1</fullName>
        <shortName>VBP-1</shortName>
        <shortName>VHL-binding protein 1</shortName>
    </alternativeName>
</protein>
<organism>
    <name type="scientific">Homo sapiens</name>
    <name type="common">Human</name>
    <dbReference type="NCBI Taxonomy" id="9606"/>
    <lineage>
        <taxon>Eukaryota</taxon>
        <taxon>Metazoa</taxon>
        <taxon>Chordata</taxon>
        <taxon>Craniata</taxon>
        <taxon>Vertebrata</taxon>
        <taxon>Euteleostomi</taxon>
        <taxon>Mammalia</taxon>
        <taxon>Eutheria</taxon>
        <taxon>Euarchontoglires</taxon>
        <taxon>Primates</taxon>
        <taxon>Haplorrhini</taxon>
        <taxon>Catarrhini</taxon>
        <taxon>Hominidae</taxon>
        <taxon>Homo</taxon>
    </lineage>
</organism>
<comment type="function">
    <text evidence="2">Binds specifically to cytosolic chaperonin (c-CPN) and transfers target proteins to it. Binds to nascent polypeptide chain and promotes folding in an environment in which there are many competing pathways for nonnative proteins.</text>
</comment>
<comment type="subunit">
    <text>Heterohexamer of two PFD-alpha type and four PFD-beta type subunits. Binds to the C-terminal part of VHL.</text>
</comment>
<comment type="interaction">
    <interactant intactId="EBI-357430">
        <id>P61758</id>
    </interactant>
    <interactant intactId="EBI-8643161">
        <id>Q9NX04</id>
        <label>AIRIM</label>
    </interactant>
    <organismsDiffer>false</organismsDiffer>
    <experiments>3</experiments>
</comment>
<comment type="interaction">
    <interactant intactId="EBI-357430">
        <id>P61758</id>
    </interactant>
    <interactant intactId="EBI-949378">
        <id>Q14457</id>
        <label>BECN1</label>
    </interactant>
    <organismsDiffer>false</organismsDiffer>
    <experiments>3</experiments>
</comment>
<comment type="interaction">
    <interactant intactId="EBI-357430">
        <id>P61758</id>
    </interactant>
    <interactant intactId="EBI-742054">
        <id>Q96D03</id>
        <label>DDIT4L</label>
    </interactant>
    <organismsDiffer>false</organismsDiffer>
    <experiments>3</experiments>
</comment>
<comment type="interaction">
    <interactant intactId="EBI-357430">
        <id>P61758</id>
    </interactant>
    <interactant intactId="EBI-743105">
        <id>Q5JVL4</id>
        <label>EFHC1</label>
    </interactant>
    <organismsDiffer>false</organismsDiffer>
    <experiments>3</experiments>
</comment>
<comment type="interaction">
    <interactant intactId="EBI-357430">
        <id>P61758</id>
    </interactant>
    <interactant intactId="EBI-744099">
        <id>Q9H0I2</id>
        <label>ENKD1</label>
    </interactant>
    <organismsDiffer>false</organismsDiffer>
    <experiments>3</experiments>
</comment>
<comment type="interaction">
    <interactant intactId="EBI-357430">
        <id>P61758</id>
    </interactant>
    <interactant intactId="EBI-698068">
        <id>P05230</id>
        <label>FGF1</label>
    </interactant>
    <organismsDiffer>false</organismsDiffer>
    <experiments>3</experiments>
</comment>
<comment type="interaction">
    <interactant intactId="EBI-357430">
        <id>P61758</id>
    </interactant>
    <interactant intactId="EBI-618189">
        <id>Q06547-2</id>
        <label>GABPB1</label>
    </interactant>
    <organismsDiffer>false</organismsDiffer>
    <experiments>3</experiments>
</comment>
<comment type="interaction">
    <interactant intactId="EBI-357430">
        <id>P61758</id>
    </interactant>
    <interactant intactId="EBI-7251368">
        <id>Q9BZE0</id>
        <label>GLIS2</label>
    </interactant>
    <organismsDiffer>false</organismsDiffer>
    <experiments>3</experiments>
</comment>
<comment type="interaction">
    <interactant intactId="EBI-357430">
        <id>P61758</id>
    </interactant>
    <interactant intactId="EBI-751540">
        <id>O95872</id>
        <label>GPANK1</label>
    </interactant>
    <organismsDiffer>false</organismsDiffer>
    <experiments>3</experiments>
</comment>
<comment type="interaction">
    <interactant intactId="EBI-357430">
        <id>P61758</id>
    </interactant>
    <interactant intactId="EBI-747204">
        <id>Q9UKT9</id>
        <label>IKZF3</label>
    </interactant>
    <organismsDiffer>false</organismsDiffer>
    <experiments>3</experiments>
</comment>
<comment type="interaction">
    <interactant intactId="EBI-357430">
        <id>P61758</id>
    </interactant>
    <interactant intactId="EBI-11985629">
        <id>Q96JM7-2</id>
        <label>L3MBTL3</label>
    </interactant>
    <organismsDiffer>false</organismsDiffer>
    <experiments>3</experiments>
</comment>
<comment type="interaction">
    <interactant intactId="EBI-357430">
        <id>P61758</id>
    </interactant>
    <interactant intactId="EBI-8639312">
        <id>P25800</id>
        <label>LMO1</label>
    </interactant>
    <organismsDiffer>false</organismsDiffer>
    <experiments>3</experiments>
</comment>
<comment type="interaction">
    <interactant intactId="EBI-357430">
        <id>P61758</id>
    </interactant>
    <interactant intactId="EBI-11959475">
        <id>P25791-3</id>
        <label>LMO2</label>
    </interactant>
    <organismsDiffer>false</organismsDiffer>
    <experiments>3</experiments>
</comment>
<comment type="interaction">
    <interactant intactId="EBI-357430">
        <id>P61758</id>
    </interactant>
    <interactant intactId="EBI-11742507">
        <id>Q8TAP4-4</id>
        <label>LMO3</label>
    </interactant>
    <organismsDiffer>false</organismsDiffer>
    <experiments>3</experiments>
</comment>
<comment type="interaction">
    <interactant intactId="EBI-357430">
        <id>P61758</id>
    </interactant>
    <interactant intactId="EBI-16439278">
        <id>Q6FHY5</id>
        <label>MEOX2</label>
    </interactant>
    <organismsDiffer>false</organismsDiffer>
    <experiments>3</experiments>
</comment>
<comment type="interaction">
    <interactant intactId="EBI-357430">
        <id>P61758</id>
    </interactant>
    <interactant intactId="EBI-2555085">
        <id>Q8IVT2</id>
        <label>MISP</label>
    </interactant>
    <organismsDiffer>false</organismsDiffer>
    <experiments>3</experiments>
</comment>
<comment type="interaction">
    <interactant intactId="EBI-357430">
        <id>P61758</id>
    </interactant>
    <interactant intactId="EBI-744402">
        <id>Q9NP98</id>
        <label>MYOZ1</label>
    </interactant>
    <organismsDiffer>false</organismsDiffer>
    <experiments>3</experiments>
</comment>
<comment type="interaction">
    <interactant intactId="EBI-357430">
        <id>P61758</id>
    </interactant>
    <interactant intactId="EBI-359873">
        <id>Q9UHV9</id>
        <label>PFDN2</label>
    </interactant>
    <organismsDiffer>false</organismsDiffer>
    <experiments>9</experiments>
</comment>
<comment type="interaction">
    <interactant intactId="EBI-357430">
        <id>P61758</id>
    </interactant>
    <interactant intactId="EBI-357021">
        <id>Q9NQP4</id>
        <label>PFDN4</label>
    </interactant>
    <organismsDiffer>false</organismsDiffer>
    <experiments>9</experiments>
</comment>
<comment type="interaction">
    <interactant intactId="EBI-357430">
        <id>P61758</id>
    </interactant>
    <interactant intactId="EBI-357275">
        <id>Q99471</id>
        <label>PFDN5</label>
    </interactant>
    <organismsDiffer>false</organismsDiffer>
    <experiments>9</experiments>
</comment>
<comment type="interaction">
    <interactant intactId="EBI-357430">
        <id>P61758</id>
    </interactant>
    <interactant intactId="EBI-302345">
        <id>Q8ND90</id>
        <label>PNMA1</label>
    </interactant>
    <organismsDiffer>false</organismsDiffer>
    <experiments>3</experiments>
</comment>
<comment type="interaction">
    <interactant intactId="EBI-357430">
        <id>P61758</id>
    </interactant>
    <interactant intactId="EBI-1053424">
        <id>O43741</id>
        <label>PRKAB2</label>
    </interactant>
    <organismsDiffer>false</organismsDiffer>
    <experiments>3</experiments>
</comment>
<comment type="interaction">
    <interactant intactId="EBI-357430">
        <id>P61758</id>
    </interactant>
    <interactant intactId="EBI-10179062">
        <id>O43704</id>
        <label>SULT1B1</label>
    </interactant>
    <organismsDiffer>false</organismsDiffer>
    <experiments>3</experiments>
</comment>
<comment type="interaction">
    <interactant intactId="EBI-357430">
        <id>P61758</id>
    </interactant>
    <interactant intactId="EBI-3921347">
        <id>P51687</id>
        <label>SUOX</label>
    </interactant>
    <organismsDiffer>false</organismsDiffer>
    <experiments>3</experiments>
</comment>
<comment type="interaction">
    <interactant intactId="EBI-357430">
        <id>P61758</id>
    </interactant>
    <interactant intactId="EBI-11955057">
        <id>Q8N8B7-2</id>
        <label>TCEANC</label>
    </interactant>
    <organismsDiffer>false</organismsDiffer>
    <experiments>3</experiments>
</comment>
<comment type="interaction">
    <interactant intactId="EBI-357430">
        <id>P61758</id>
    </interactant>
    <interactant intactId="EBI-17438286">
        <id>Q8WTV1</id>
        <label>THAP3</label>
    </interactant>
    <organismsDiffer>false</organismsDiffer>
    <experiments>3</experiments>
</comment>
<comment type="interaction">
    <interactant intactId="EBI-357430">
        <id>P61758</id>
    </interactant>
    <interactant intactId="EBI-739485">
        <id>Q9Y3Q8</id>
        <label>TSC22D4</label>
    </interactant>
    <organismsDiffer>false</organismsDiffer>
    <experiments>3</experiments>
</comment>
<comment type="interaction">
    <interactant intactId="EBI-357430">
        <id>P61758</id>
    </interactant>
    <interactant intactId="EBI-348604">
        <id>Q96S82</id>
        <label>UBL7</label>
    </interactant>
    <organismsDiffer>false</organismsDiffer>
    <experiments>8</experiments>
</comment>
<comment type="interaction">
    <interactant intactId="EBI-357430">
        <id>P61758</id>
    </interactant>
    <interactant intactId="EBI-11980193">
        <id>Q14119</id>
        <label>VEZF1</label>
    </interactant>
    <organismsDiffer>false</organismsDiffer>
    <experiments>3</experiments>
</comment>
<comment type="interaction">
    <interactant intactId="EBI-357430">
        <id>P61758</id>
    </interactant>
    <interactant intactId="EBI-749023">
        <id>Q9UNY5</id>
        <label>ZNF232</label>
    </interactant>
    <organismsDiffer>false</organismsDiffer>
    <experiments>3</experiments>
</comment>
<comment type="interaction">
    <interactant intactId="EBI-357430">
        <id>P61758</id>
    </interactant>
    <interactant intactId="EBI-11741890">
        <id>Q86VK4-3</id>
        <label>ZNF410</label>
    </interactant>
    <organismsDiffer>false</organismsDiffer>
    <experiments>3</experiments>
</comment>
<comment type="interaction">
    <interactant intactId="EBI-357430">
        <id>P61758</id>
    </interactant>
    <interactant intactId="EBI-25831733">
        <id>Q96MN9-2</id>
        <label>ZNF488</label>
    </interactant>
    <organismsDiffer>false</organismsDiffer>
    <experiments>3</experiments>
</comment>
<comment type="interaction">
    <interactant intactId="EBI-357430">
        <id>P61758</id>
    </interactant>
    <interactant intactId="EBI-3921014">
        <id>Q9H609</id>
        <label>ZNF576</label>
    </interactant>
    <organismsDiffer>false</organismsDiffer>
    <experiments>3</experiments>
</comment>
<comment type="interaction">
    <interactant intactId="EBI-357430">
        <id>P61758</id>
    </interactant>
    <interactant intactId="EBI-745520">
        <id>Q9P0T4</id>
        <label>ZNF581</label>
    </interactant>
    <organismsDiffer>false</organismsDiffer>
    <experiments>3</experiments>
</comment>
<comment type="interaction">
    <interactant intactId="EBI-357430">
        <id>P61758</id>
    </interactant>
    <interactant intactId="EBI-911612">
        <id>P35963</id>
        <label>gag-pol</label>
    </interactant>
    <organismsDiffer>true</organismsDiffer>
    <experiments>3</experiments>
</comment>
<comment type="interaction">
    <interactant intactId="EBI-357430">
        <id>P61758</id>
    </interactant>
    <interactant intactId="EBI-6248094">
        <id>Q9Q2G4</id>
        <label>ORF</label>
    </interactant>
    <organismsDiffer>true</organismsDiffer>
    <experiments>3</experiments>
</comment>
<comment type="subcellular location">
    <subcellularLocation>
        <location>Cytoplasm</location>
    </subcellularLocation>
    <subcellularLocation>
        <location>Nucleus</location>
    </subcellularLocation>
    <text>In complex with VHL can translocate to the nucleus.</text>
</comment>
<comment type="alternative products">
    <event type="alternative splicing"/>
    <isoform>
        <id>P61758-1</id>
        <name>1</name>
        <sequence type="displayed"/>
    </isoform>
    <isoform>
        <id>P61758-2</id>
        <name>2</name>
        <sequence type="described" ref="VSP_060081"/>
    </isoform>
</comment>
<comment type="tissue specificity">
    <text>Ubiquitous.</text>
</comment>
<comment type="similarity">
    <text evidence="3">Belongs to the prefoldin subunit alpha family.</text>
</comment>
<comment type="sequence caution" evidence="3">
    <conflict type="erroneous initiation">
        <sequence resource="EMBL-CDS" id="AAC23907"/>
    </conflict>
    <text>Extended N-terminus.</text>
</comment>
<gene>
    <name type="primary">VBP1</name>
    <name type="synonym">PFDN3</name>
</gene>
<name>PFD3_HUMAN</name>
<dbReference type="EMBL" id="U96759">
    <property type="protein sequence ID" value="AAC23907.1"/>
    <property type="status" value="ALT_INIT"/>
    <property type="molecule type" value="mRNA"/>
</dbReference>
<dbReference type="EMBL" id="Y17394">
    <property type="protein sequence ID" value="CAA76761.1"/>
    <property type="molecule type" value="mRNA"/>
</dbReference>
<dbReference type="EMBL" id="AK301646">
    <property type="protein sequence ID" value="BAG63125.1"/>
    <property type="molecule type" value="mRNA"/>
</dbReference>
<dbReference type="EMBL" id="AK313420">
    <property type="protein sequence ID" value="BAG36212.1"/>
    <property type="molecule type" value="mRNA"/>
</dbReference>
<dbReference type="EMBL" id="BT019604">
    <property type="protein sequence ID" value="AAV38411.1"/>
    <property type="molecule type" value="mRNA"/>
</dbReference>
<dbReference type="EMBL" id="AL356738">
    <property type="protein sequence ID" value="CAI41469.1"/>
    <property type="molecule type" value="Genomic_DNA"/>
</dbReference>
<dbReference type="EMBL" id="BX682237">
    <property type="status" value="NOT_ANNOTATED_CDS"/>
    <property type="molecule type" value="Genomic_DNA"/>
</dbReference>
<dbReference type="EMBL" id="BC046094">
    <property type="protein sequence ID" value="AAH46094.1"/>
    <property type="molecule type" value="mRNA"/>
</dbReference>
<dbReference type="EMBL" id="U56833">
    <property type="protein sequence ID" value="AAC50617.1"/>
    <property type="molecule type" value="mRNA"/>
</dbReference>
<dbReference type="CCDS" id="CCDS14765.1">
    <molecule id="P61758-1"/>
</dbReference>
<dbReference type="CCDS" id="CCDS78525.1">
    <molecule id="P61758-2"/>
</dbReference>
<dbReference type="RefSeq" id="NP_001290472.1">
    <property type="nucleotide sequence ID" value="NM_001303543.1"/>
</dbReference>
<dbReference type="RefSeq" id="NP_001290473.1">
    <molecule id="P61758-2"/>
    <property type="nucleotide sequence ID" value="NM_001303544.1"/>
</dbReference>
<dbReference type="RefSeq" id="NP_001290474.1">
    <property type="nucleotide sequence ID" value="NM_001303545.1"/>
</dbReference>
<dbReference type="RefSeq" id="NP_003363.1">
    <molecule id="P61758-1"/>
    <property type="nucleotide sequence ID" value="NM_003372.7"/>
</dbReference>
<dbReference type="PDB" id="6NR8">
    <property type="method" value="EM"/>
    <property type="resolution" value="7.80 A"/>
    <property type="chains" value="3=49-180"/>
</dbReference>
<dbReference type="PDB" id="6NR9">
    <property type="method" value="EM"/>
    <property type="resolution" value="8.50 A"/>
    <property type="chains" value="3=49-180"/>
</dbReference>
<dbReference type="PDB" id="6NRB">
    <property type="method" value="EM"/>
    <property type="resolution" value="8.70 A"/>
    <property type="chains" value="3=49-180"/>
</dbReference>
<dbReference type="PDB" id="6NRC">
    <property type="method" value="EM"/>
    <property type="resolution" value="8.30 A"/>
    <property type="chains" value="3=49-180"/>
</dbReference>
<dbReference type="PDB" id="6NRD">
    <property type="method" value="EM"/>
    <property type="resolution" value="8.20 A"/>
    <property type="chains" value="3=49-180"/>
</dbReference>
<dbReference type="PDB" id="7WU7">
    <property type="method" value="EM"/>
    <property type="resolution" value="3.85 A"/>
    <property type="chains" value="3=1-197"/>
</dbReference>
<dbReference type="PDBsum" id="6NR8"/>
<dbReference type="PDBsum" id="6NR9"/>
<dbReference type="PDBsum" id="6NRB"/>
<dbReference type="PDBsum" id="6NRC"/>
<dbReference type="PDBsum" id="6NRD"/>
<dbReference type="PDBsum" id="7WU7"/>
<dbReference type="EMDB" id="EMD-0490"/>
<dbReference type="EMDB" id="EMD-0491"/>
<dbReference type="EMDB" id="EMD-0493"/>
<dbReference type="EMDB" id="EMD-0494"/>
<dbReference type="EMDB" id="EMD-0495"/>
<dbReference type="EMDB" id="EMD-32823"/>
<dbReference type="SMR" id="P61758"/>
<dbReference type="BioGRID" id="113254">
    <property type="interactions" value="216"/>
</dbReference>
<dbReference type="ComplexPortal" id="CPX-25767">
    <property type="entry name" value="Prefoldin co-chaperone complex"/>
</dbReference>
<dbReference type="ComplexPortal" id="CPX-6149">
    <property type="entry name" value="Prefoldin co-chaperone complex"/>
</dbReference>
<dbReference type="CORUM" id="P61758"/>
<dbReference type="DIP" id="DIP-46479N"/>
<dbReference type="FunCoup" id="P61758">
    <property type="interactions" value="2285"/>
</dbReference>
<dbReference type="IntAct" id="P61758">
    <property type="interactions" value="102"/>
</dbReference>
<dbReference type="MINT" id="P61758"/>
<dbReference type="STRING" id="9606.ENSP00000286428"/>
<dbReference type="GlyGen" id="P61758">
    <property type="glycosylation" value="2 sites, 1 N-linked glycan (1 site), 1 O-linked glycan (1 site)"/>
</dbReference>
<dbReference type="iPTMnet" id="P61758"/>
<dbReference type="MetOSite" id="P61758"/>
<dbReference type="PhosphoSitePlus" id="P61758"/>
<dbReference type="BioMuta" id="VBP1"/>
<dbReference type="DMDM" id="125987848"/>
<dbReference type="OGP" id="P61758"/>
<dbReference type="jPOST" id="P61758"/>
<dbReference type="MassIVE" id="P61758"/>
<dbReference type="PaxDb" id="9606-ENSP00000286428"/>
<dbReference type="PeptideAtlas" id="P61758"/>
<dbReference type="ProteomicsDB" id="25914"/>
<dbReference type="ProteomicsDB" id="57330"/>
<dbReference type="Pumba" id="P61758"/>
<dbReference type="Antibodypedia" id="3341">
    <property type="antibodies" value="393 antibodies from 29 providers"/>
</dbReference>
<dbReference type="DNASU" id="7411"/>
<dbReference type="Ensembl" id="ENST00000286428.7">
    <molecule id="P61758-1"/>
    <property type="protein sequence ID" value="ENSP00000286428.5"/>
    <property type="gene ID" value="ENSG00000155959.12"/>
</dbReference>
<dbReference type="Ensembl" id="ENST00000535916.5">
    <molecule id="P61758-2"/>
    <property type="protein sequence ID" value="ENSP00000438694.1"/>
    <property type="gene ID" value="ENSG00000155959.12"/>
</dbReference>
<dbReference type="Ensembl" id="ENST00000625964.2">
    <molecule id="P61758-2"/>
    <property type="protein sequence ID" value="ENSP00000486053.1"/>
    <property type="gene ID" value="ENSG00000155959.12"/>
</dbReference>
<dbReference type="GeneID" id="7411"/>
<dbReference type="KEGG" id="hsa:7411"/>
<dbReference type="MANE-Select" id="ENST00000286428.7">
    <property type="protein sequence ID" value="ENSP00000286428.5"/>
    <property type="RefSeq nucleotide sequence ID" value="NM_003372.7"/>
    <property type="RefSeq protein sequence ID" value="NP_003363.1"/>
</dbReference>
<dbReference type="UCSC" id="uc004fnc.4">
    <molecule id="P61758-1"/>
    <property type="organism name" value="human"/>
</dbReference>
<dbReference type="UCSC" id="uc065cjx.1">
    <property type="organism name" value="human"/>
</dbReference>
<dbReference type="AGR" id="HGNC:12662"/>
<dbReference type="CTD" id="7411"/>
<dbReference type="DisGeNET" id="7411"/>
<dbReference type="GeneCards" id="VBP1"/>
<dbReference type="HGNC" id="HGNC:12662">
    <property type="gene designation" value="VBP1"/>
</dbReference>
<dbReference type="HPA" id="ENSG00000155959">
    <property type="expression patterns" value="Low tissue specificity"/>
</dbReference>
<dbReference type="MIM" id="300133">
    <property type="type" value="gene"/>
</dbReference>
<dbReference type="neXtProt" id="NX_P61758"/>
<dbReference type="OpenTargets" id="ENSG00000155959"/>
<dbReference type="PharmGKB" id="PA37285"/>
<dbReference type="VEuPathDB" id="HostDB:ENSG00000155959"/>
<dbReference type="eggNOG" id="KOG3313">
    <property type="taxonomic scope" value="Eukaryota"/>
</dbReference>
<dbReference type="GeneTree" id="ENSGT00390000018904"/>
<dbReference type="HOGENOM" id="CLU_083737_1_0_1"/>
<dbReference type="InParanoid" id="P61758"/>
<dbReference type="OMA" id="YNWDVAQ"/>
<dbReference type="OrthoDB" id="6375174at2759"/>
<dbReference type="PAN-GO" id="P61758">
    <property type="GO annotations" value="6 GO annotations based on evolutionary models"/>
</dbReference>
<dbReference type="PhylomeDB" id="P61758"/>
<dbReference type="TreeFam" id="TF313706"/>
<dbReference type="PathwayCommons" id="P61758"/>
<dbReference type="Reactome" id="R-HSA-389957">
    <property type="pathway name" value="Prefoldin mediated transfer of substrate to CCT/TriC"/>
</dbReference>
<dbReference type="SignaLink" id="P61758"/>
<dbReference type="SIGNOR" id="P61758"/>
<dbReference type="BioGRID-ORCS" id="7411">
    <property type="hits" value="156 hits in 785 CRISPR screens"/>
</dbReference>
<dbReference type="CD-CODE" id="DEE660B4">
    <property type="entry name" value="Stress granule"/>
</dbReference>
<dbReference type="ChiTaRS" id="VBP1">
    <property type="organism name" value="human"/>
</dbReference>
<dbReference type="GenomeRNAi" id="7411"/>
<dbReference type="Pharos" id="P61758">
    <property type="development level" value="Tbio"/>
</dbReference>
<dbReference type="PRO" id="PR:P61758"/>
<dbReference type="Proteomes" id="UP000005640">
    <property type="component" value="Chromosome X"/>
</dbReference>
<dbReference type="RNAct" id="P61758">
    <property type="molecule type" value="protein"/>
</dbReference>
<dbReference type="Bgee" id="ENSG00000155959">
    <property type="expression patterns" value="Expressed in biceps brachii and 214 other cell types or tissues"/>
</dbReference>
<dbReference type="GO" id="GO:0005737">
    <property type="term" value="C:cytoplasm"/>
    <property type="evidence" value="ECO:0000318"/>
    <property type="project" value="GO_Central"/>
</dbReference>
<dbReference type="GO" id="GO:0005829">
    <property type="term" value="C:cytosol"/>
    <property type="evidence" value="ECO:0000314"/>
    <property type="project" value="HPA"/>
</dbReference>
<dbReference type="GO" id="GO:0043231">
    <property type="term" value="C:intracellular membrane-bounded organelle"/>
    <property type="evidence" value="ECO:0000314"/>
    <property type="project" value="HPA"/>
</dbReference>
<dbReference type="GO" id="GO:0005634">
    <property type="term" value="C:nucleus"/>
    <property type="evidence" value="ECO:0007669"/>
    <property type="project" value="UniProtKB-SubCell"/>
</dbReference>
<dbReference type="GO" id="GO:0016272">
    <property type="term" value="C:prefoldin complex"/>
    <property type="evidence" value="ECO:0000314"/>
    <property type="project" value="FlyBase"/>
</dbReference>
<dbReference type="GO" id="GO:0001540">
    <property type="term" value="F:amyloid-beta binding"/>
    <property type="evidence" value="ECO:0000314"/>
    <property type="project" value="FlyBase"/>
</dbReference>
<dbReference type="GO" id="GO:0015631">
    <property type="term" value="F:tubulin binding"/>
    <property type="evidence" value="ECO:0000318"/>
    <property type="project" value="GO_Central"/>
</dbReference>
<dbReference type="GO" id="GO:0051082">
    <property type="term" value="F:unfolded protein binding"/>
    <property type="evidence" value="ECO:0000314"/>
    <property type="project" value="FlyBase"/>
</dbReference>
<dbReference type="GO" id="GO:0061077">
    <property type="term" value="P:chaperone-mediated protein folding"/>
    <property type="evidence" value="ECO:0000303"/>
    <property type="project" value="ComplexPortal"/>
</dbReference>
<dbReference type="GO" id="GO:0007017">
    <property type="term" value="P:microtubule-based process"/>
    <property type="evidence" value="ECO:0000318"/>
    <property type="project" value="GO_Central"/>
</dbReference>
<dbReference type="GO" id="GO:1905907">
    <property type="term" value="P:negative regulation of amyloid fibril formation"/>
    <property type="evidence" value="ECO:0000314"/>
    <property type="project" value="FlyBase"/>
</dbReference>
<dbReference type="GO" id="GO:0006457">
    <property type="term" value="P:protein folding"/>
    <property type="evidence" value="ECO:0000314"/>
    <property type="project" value="FlyBase"/>
</dbReference>
<dbReference type="GO" id="GO:0007021">
    <property type="term" value="P:tubulin complex assembly"/>
    <property type="evidence" value="ECO:0000318"/>
    <property type="project" value="GO_Central"/>
</dbReference>
<dbReference type="CDD" id="cd23156">
    <property type="entry name" value="Prefoldin_3"/>
    <property type="match status" value="1"/>
</dbReference>
<dbReference type="FunFam" id="1.10.287.370:FF:000001">
    <property type="entry name" value="Prefoldin subunit 3"/>
    <property type="match status" value="1"/>
</dbReference>
<dbReference type="Gene3D" id="1.10.287.370">
    <property type="match status" value="1"/>
</dbReference>
<dbReference type="InterPro" id="IPR016655">
    <property type="entry name" value="PFD3"/>
</dbReference>
<dbReference type="InterPro" id="IPR009053">
    <property type="entry name" value="Prefoldin"/>
</dbReference>
<dbReference type="InterPro" id="IPR004127">
    <property type="entry name" value="Prefoldin_subunit_alpha"/>
</dbReference>
<dbReference type="PANTHER" id="PTHR12409">
    <property type="entry name" value="PREFOLDIN SUBUNIT 3"/>
    <property type="match status" value="1"/>
</dbReference>
<dbReference type="PANTHER" id="PTHR12409:SF0">
    <property type="entry name" value="PREFOLDIN SUBUNIT 3"/>
    <property type="match status" value="1"/>
</dbReference>
<dbReference type="Pfam" id="PF02996">
    <property type="entry name" value="Prefoldin"/>
    <property type="match status" value="1"/>
</dbReference>
<dbReference type="PIRSF" id="PIRSF016396">
    <property type="entry name" value="Prefoldin_subunit_3"/>
    <property type="match status" value="1"/>
</dbReference>
<dbReference type="SUPFAM" id="SSF46579">
    <property type="entry name" value="Prefoldin"/>
    <property type="match status" value="1"/>
</dbReference>
<accession>P61758</accession>
<accession>B2R8L5</accession>
<accession>B4DWR3</accession>
<accession>F5H2A7</accession>
<accession>O55228</accession>
<accession>Q15765</accession>
<accession>Q5JT81</accession>
<accession>Q86X96</accession>
<keyword id="KW-0002">3D-structure</keyword>
<keyword id="KW-0007">Acetylation</keyword>
<keyword id="KW-0025">Alternative splicing</keyword>
<keyword id="KW-0143">Chaperone</keyword>
<keyword id="KW-0963">Cytoplasm</keyword>
<keyword id="KW-0539">Nucleus</keyword>
<keyword id="KW-1267">Proteomics identification</keyword>
<keyword id="KW-1185">Reference proteome</keyword>